<dbReference type="EC" id="6.3.2.-" evidence="1"/>
<dbReference type="EMBL" id="CP000941">
    <property type="protein sequence ID" value="ACA12964.1"/>
    <property type="molecule type" value="Genomic_DNA"/>
</dbReference>
<dbReference type="RefSeq" id="WP_004084588.1">
    <property type="nucleotide sequence ID" value="NC_010513.1"/>
</dbReference>
<dbReference type="SMR" id="B0U5E6"/>
<dbReference type="KEGG" id="xfm:Xfasm12_2103"/>
<dbReference type="HOGENOM" id="CLU_054353_0_1_6"/>
<dbReference type="GO" id="GO:0005737">
    <property type="term" value="C:cytoplasm"/>
    <property type="evidence" value="ECO:0007669"/>
    <property type="project" value="TreeGrafter"/>
</dbReference>
<dbReference type="GO" id="GO:0005524">
    <property type="term" value="F:ATP binding"/>
    <property type="evidence" value="ECO:0007669"/>
    <property type="project" value="UniProtKB-UniRule"/>
</dbReference>
<dbReference type="GO" id="GO:0046872">
    <property type="term" value="F:metal ion binding"/>
    <property type="evidence" value="ECO:0007669"/>
    <property type="project" value="UniProtKB-KW"/>
</dbReference>
<dbReference type="GO" id="GO:0018169">
    <property type="term" value="F:ribosomal S6-glutamic acid ligase activity"/>
    <property type="evidence" value="ECO:0007669"/>
    <property type="project" value="TreeGrafter"/>
</dbReference>
<dbReference type="GO" id="GO:0036211">
    <property type="term" value="P:protein modification process"/>
    <property type="evidence" value="ECO:0007669"/>
    <property type="project" value="InterPro"/>
</dbReference>
<dbReference type="GO" id="GO:0009432">
    <property type="term" value="P:SOS response"/>
    <property type="evidence" value="ECO:0007669"/>
    <property type="project" value="TreeGrafter"/>
</dbReference>
<dbReference type="GO" id="GO:0006412">
    <property type="term" value="P:translation"/>
    <property type="evidence" value="ECO:0007669"/>
    <property type="project" value="UniProtKB-KW"/>
</dbReference>
<dbReference type="FunFam" id="3.30.1490.20:FF:000005">
    <property type="entry name" value="Probable alpha-L-glutamate ligase 1"/>
    <property type="match status" value="1"/>
</dbReference>
<dbReference type="Gene3D" id="3.40.50.20">
    <property type="match status" value="1"/>
</dbReference>
<dbReference type="Gene3D" id="3.30.1490.20">
    <property type="entry name" value="ATP-grasp fold, A domain"/>
    <property type="match status" value="1"/>
</dbReference>
<dbReference type="Gene3D" id="3.30.470.20">
    <property type="entry name" value="ATP-grasp fold, B domain"/>
    <property type="match status" value="1"/>
</dbReference>
<dbReference type="HAMAP" id="MF_01552">
    <property type="entry name" value="RimK"/>
    <property type="match status" value="1"/>
</dbReference>
<dbReference type="InterPro" id="IPR011761">
    <property type="entry name" value="ATP-grasp"/>
</dbReference>
<dbReference type="InterPro" id="IPR013651">
    <property type="entry name" value="ATP-grasp_RimK-type"/>
</dbReference>
<dbReference type="InterPro" id="IPR013815">
    <property type="entry name" value="ATP_grasp_subdomain_1"/>
</dbReference>
<dbReference type="InterPro" id="IPR023533">
    <property type="entry name" value="RimK"/>
</dbReference>
<dbReference type="InterPro" id="IPR041107">
    <property type="entry name" value="Rimk_N"/>
</dbReference>
<dbReference type="InterPro" id="IPR004666">
    <property type="entry name" value="Rp_bS6_RimK/Lys_biosynth_LsyX"/>
</dbReference>
<dbReference type="NCBIfam" id="NF007764">
    <property type="entry name" value="PRK10446.1"/>
    <property type="match status" value="1"/>
</dbReference>
<dbReference type="NCBIfam" id="TIGR00768">
    <property type="entry name" value="rimK_fam"/>
    <property type="match status" value="1"/>
</dbReference>
<dbReference type="PANTHER" id="PTHR21621:SF7">
    <property type="entry name" value="RIBOSOMAL PROTEIN BS6--L-GLUTAMATE LIGASE"/>
    <property type="match status" value="1"/>
</dbReference>
<dbReference type="PANTHER" id="PTHR21621">
    <property type="entry name" value="RIBOSOMAL PROTEIN S6 MODIFICATION PROTEIN"/>
    <property type="match status" value="1"/>
</dbReference>
<dbReference type="Pfam" id="PF08443">
    <property type="entry name" value="RimK"/>
    <property type="match status" value="1"/>
</dbReference>
<dbReference type="Pfam" id="PF18030">
    <property type="entry name" value="Rimk_N"/>
    <property type="match status" value="1"/>
</dbReference>
<dbReference type="SUPFAM" id="SSF56059">
    <property type="entry name" value="Glutathione synthetase ATP-binding domain-like"/>
    <property type="match status" value="1"/>
</dbReference>
<dbReference type="PROSITE" id="PS50975">
    <property type="entry name" value="ATP_GRASP"/>
    <property type="match status" value="1"/>
</dbReference>
<evidence type="ECO:0000255" key="1">
    <source>
        <dbReference type="HAMAP-Rule" id="MF_01552"/>
    </source>
</evidence>
<reference key="1">
    <citation type="journal article" date="2010" name="J. Bacteriol.">
        <title>Whole genome sequences of two Xylella fastidiosa strains (M12 and M23) causing almond leaf scorch disease in California.</title>
        <authorList>
            <person name="Chen J."/>
            <person name="Xie G."/>
            <person name="Han S."/>
            <person name="Chertkov O."/>
            <person name="Sims D."/>
            <person name="Civerolo E.L."/>
        </authorList>
    </citation>
    <scope>NUCLEOTIDE SEQUENCE [LARGE SCALE GENOMIC DNA]</scope>
    <source>
        <strain>M12</strain>
    </source>
</reference>
<gene>
    <name evidence="1" type="primary">rimK</name>
    <name type="ordered locus">Xfasm12_2103</name>
</gene>
<keyword id="KW-0067">ATP-binding</keyword>
<keyword id="KW-0436">Ligase</keyword>
<keyword id="KW-0460">Magnesium</keyword>
<keyword id="KW-0464">Manganese</keyword>
<keyword id="KW-0479">Metal-binding</keyword>
<keyword id="KW-0547">Nucleotide-binding</keyword>
<keyword id="KW-0648">Protein biosynthesis</keyword>
<organism>
    <name type="scientific">Xylella fastidiosa (strain M12)</name>
    <dbReference type="NCBI Taxonomy" id="405440"/>
    <lineage>
        <taxon>Bacteria</taxon>
        <taxon>Pseudomonadati</taxon>
        <taxon>Pseudomonadota</taxon>
        <taxon>Gammaproteobacteria</taxon>
        <taxon>Lysobacterales</taxon>
        <taxon>Lysobacteraceae</taxon>
        <taxon>Xylella</taxon>
    </lineage>
</organism>
<sequence>MKLAILSRNSKLYSTRRLVEVARMRGHTVRILDPLRCYMRIVVGDFSMHYKGKPIDGYHAVIPRIGVSVTHYATAVLRQFELMGTYSPNPSDAILRSRDKLRAHQLLAAQGIDMPMTVFGDNPDDTQDLLSMLGPPPHVVKLNEGAQGKGVILSEKNSASRGLVEALRGLYANFLVQEFISEADSADLRCFVVGNQVVATMRRQAADGDFRSNLHLGGSATAATASEEEQEVAVRSAHALGLTVAGVDLIRSRRGPLVLEVNPTPGLEGIEATSGTNVAIKIVHHVEEMLATICSSNICQP</sequence>
<feature type="chain" id="PRO_1000146955" description="Probable alpha-L-glutamate ligase">
    <location>
        <begin position="1"/>
        <end position="301"/>
    </location>
</feature>
<feature type="domain" description="ATP-grasp" evidence="1">
    <location>
        <begin position="104"/>
        <end position="287"/>
    </location>
</feature>
<feature type="binding site" evidence="1">
    <location>
        <position position="141"/>
    </location>
    <ligand>
        <name>ATP</name>
        <dbReference type="ChEBI" id="CHEBI:30616"/>
    </ligand>
</feature>
<feature type="binding site" evidence="1">
    <location>
        <begin position="178"/>
        <end position="179"/>
    </location>
    <ligand>
        <name>ATP</name>
        <dbReference type="ChEBI" id="CHEBI:30616"/>
    </ligand>
</feature>
<feature type="binding site" evidence="1">
    <location>
        <position position="187"/>
    </location>
    <ligand>
        <name>ATP</name>
        <dbReference type="ChEBI" id="CHEBI:30616"/>
    </ligand>
</feature>
<feature type="binding site" evidence="1">
    <location>
        <begin position="211"/>
        <end position="213"/>
    </location>
    <ligand>
        <name>ATP</name>
        <dbReference type="ChEBI" id="CHEBI:30616"/>
    </ligand>
</feature>
<feature type="binding site" evidence="1">
    <location>
        <position position="248"/>
    </location>
    <ligand>
        <name>Mg(2+)</name>
        <dbReference type="ChEBI" id="CHEBI:18420"/>
        <label>1</label>
    </ligand>
</feature>
<feature type="binding site" evidence="1">
    <location>
        <position position="248"/>
    </location>
    <ligand>
        <name>Mn(2+)</name>
        <dbReference type="ChEBI" id="CHEBI:29035"/>
        <label>1</label>
    </ligand>
</feature>
<feature type="binding site" evidence="1">
    <location>
        <position position="260"/>
    </location>
    <ligand>
        <name>Mg(2+)</name>
        <dbReference type="ChEBI" id="CHEBI:18420"/>
        <label>1</label>
    </ligand>
</feature>
<feature type="binding site" evidence="1">
    <location>
        <position position="260"/>
    </location>
    <ligand>
        <name>Mg(2+)</name>
        <dbReference type="ChEBI" id="CHEBI:18420"/>
        <label>2</label>
    </ligand>
</feature>
<feature type="binding site" evidence="1">
    <location>
        <position position="260"/>
    </location>
    <ligand>
        <name>Mn(2+)</name>
        <dbReference type="ChEBI" id="CHEBI:29035"/>
        <label>1</label>
    </ligand>
</feature>
<feature type="binding site" evidence="1">
    <location>
        <position position="260"/>
    </location>
    <ligand>
        <name>Mn(2+)</name>
        <dbReference type="ChEBI" id="CHEBI:29035"/>
        <label>2</label>
    </ligand>
</feature>
<feature type="binding site" evidence="1">
    <location>
        <position position="262"/>
    </location>
    <ligand>
        <name>Mg(2+)</name>
        <dbReference type="ChEBI" id="CHEBI:18420"/>
        <label>2</label>
    </ligand>
</feature>
<feature type="binding site" evidence="1">
    <location>
        <position position="262"/>
    </location>
    <ligand>
        <name>Mn(2+)</name>
        <dbReference type="ChEBI" id="CHEBI:29035"/>
        <label>2</label>
    </ligand>
</feature>
<name>RIMK_XYLFM</name>
<protein>
    <recommendedName>
        <fullName evidence="1">Probable alpha-L-glutamate ligase</fullName>
        <ecNumber evidence="1">6.3.2.-</ecNumber>
    </recommendedName>
</protein>
<accession>B0U5E6</accession>
<comment type="cofactor">
    <cofactor evidence="1">
        <name>Mg(2+)</name>
        <dbReference type="ChEBI" id="CHEBI:18420"/>
    </cofactor>
    <cofactor evidence="1">
        <name>Mn(2+)</name>
        <dbReference type="ChEBI" id="CHEBI:29035"/>
    </cofactor>
    <text evidence="1">Binds 2 magnesium or manganese ions per subunit.</text>
</comment>
<comment type="similarity">
    <text evidence="1">Belongs to the RimK family.</text>
</comment>
<proteinExistence type="inferred from homology"/>